<feature type="initiator methionine" description="Removed" evidence="2">
    <location>
        <position position="1"/>
    </location>
</feature>
<feature type="chain" id="PRO_0000238920" description="Caveolae-associated protein 2">
    <location>
        <begin position="2"/>
        <end position="417"/>
    </location>
</feature>
<feature type="region of interest" description="Disordered" evidence="5">
    <location>
        <begin position="1"/>
        <end position="42"/>
    </location>
</feature>
<feature type="region of interest" description="Interaction with CAVIN1" evidence="3">
    <location>
        <begin position="2"/>
        <end position="168"/>
    </location>
</feature>
<feature type="region of interest" description="Leucine-zipper" evidence="2">
    <location>
        <begin position="62"/>
        <end position="100"/>
    </location>
</feature>
<feature type="region of interest" description="Disordered" evidence="5">
    <location>
        <begin position="198"/>
        <end position="242"/>
    </location>
</feature>
<feature type="region of interest" description="Disordered" evidence="5">
    <location>
        <begin position="256"/>
        <end position="381"/>
    </location>
</feature>
<feature type="coiled-coil region" evidence="4">
    <location>
        <begin position="61"/>
        <end position="87"/>
    </location>
</feature>
<feature type="coiled-coil region" evidence="4">
    <location>
        <begin position="126"/>
        <end position="267"/>
    </location>
</feature>
<feature type="compositionally biased region" description="Acidic residues" evidence="5">
    <location>
        <begin position="202"/>
        <end position="218"/>
    </location>
</feature>
<feature type="compositionally biased region" description="Basic and acidic residues" evidence="5">
    <location>
        <begin position="219"/>
        <end position="242"/>
    </location>
</feature>
<feature type="compositionally biased region" description="Polar residues" evidence="5">
    <location>
        <begin position="274"/>
        <end position="286"/>
    </location>
</feature>
<feature type="compositionally biased region" description="Basic and acidic residues" evidence="5">
    <location>
        <begin position="302"/>
        <end position="320"/>
    </location>
</feature>
<feature type="compositionally biased region" description="Polar residues" evidence="5">
    <location>
        <begin position="354"/>
        <end position="365"/>
    </location>
</feature>
<feature type="compositionally biased region" description="Acidic residues" evidence="5">
    <location>
        <begin position="367"/>
        <end position="376"/>
    </location>
</feature>
<feature type="modified residue" description="N-acetylglycine" evidence="2">
    <location>
        <position position="2"/>
    </location>
</feature>
<feature type="modified residue" description="Phosphoserine" evidence="10">
    <location>
        <position position="27"/>
    </location>
</feature>
<feature type="modified residue" description="Phosphoserine" evidence="10">
    <location>
        <position position="35"/>
    </location>
</feature>
<feature type="modified residue" description="Phosphoserine" evidence="3">
    <location>
        <position position="37"/>
    </location>
</feature>
<feature type="modified residue" description="Phosphoserine" evidence="10">
    <location>
        <position position="51"/>
    </location>
</feature>
<feature type="modified residue" description="Phosphothreonine" evidence="2">
    <location>
        <position position="195"/>
    </location>
</feature>
<feature type="modified residue" description="Phosphoserine" evidence="10">
    <location>
        <position position="202"/>
    </location>
</feature>
<feature type="modified residue" description="Phosphoserine" evidence="10">
    <location>
        <position position="203"/>
    </location>
</feature>
<feature type="modified residue" description="Phosphoserine" evidence="10">
    <location>
        <position position="217"/>
    </location>
</feature>
<feature type="modified residue" description="Phosphoserine" evidence="3">
    <location>
        <position position="282"/>
    </location>
</feature>
<feature type="modified residue" description="Phosphoserine" evidence="10">
    <location>
        <position position="283"/>
    </location>
</feature>
<feature type="modified residue" description="Phosphoserine" evidence="2">
    <location>
        <position position="286"/>
    </location>
</feature>
<feature type="modified residue" description="Phosphoserine" evidence="2">
    <location>
        <position position="287"/>
    </location>
</feature>
<feature type="modified residue" description="Phosphoserine" evidence="10">
    <location>
        <position position="292"/>
    </location>
</feature>
<feature type="modified residue" description="Phosphoserine" evidence="3">
    <location>
        <position position="295"/>
    </location>
</feature>
<feature type="modified residue" description="Phosphoserine" evidence="10">
    <location>
        <position position="326"/>
    </location>
</feature>
<feature type="modified residue" description="Phosphoserine" evidence="10">
    <location>
        <position position="335"/>
    </location>
</feature>
<feature type="modified residue" description="Phosphoserine" evidence="3">
    <location>
        <position position="358"/>
    </location>
</feature>
<feature type="modified residue" description="Phosphoserine" evidence="10">
    <location>
        <position position="362"/>
    </location>
</feature>
<feature type="modified residue" description="Phosphothreonine" evidence="3">
    <location>
        <position position="367"/>
    </location>
</feature>
<feature type="modified residue" description="Phosphotyrosine" evidence="3">
    <location>
        <position position="387"/>
    </location>
</feature>
<feature type="modified residue" description="Phosphoserine" evidence="10">
    <location>
        <position position="389"/>
    </location>
</feature>
<feature type="modified residue" description="Phosphoserine" evidence="10">
    <location>
        <position position="395"/>
    </location>
</feature>
<accession>Q66H98</accession>
<sequence>MGEDAAQAEKFQHPNTDMLQEKPSNPSPMPSSTPSPSLNLGSTEEAIRDNSQVNAVTVHTLLDKLVNMLDAVRENQHNMEQRQINLEGSVKGIQNDLTKLSKYQASTSNTVSKLLEKSRKVSAHTRAVRERLEKQCVQVKRLENNHAQLLRRNHFKVLIFQEESEIPASVFVKEPVPSTAEGKELADENKSLEETLHNVDLSSDDELPGDEEALEDSAEEKMEESRAEKIKRSSLKKVDSLKKAFSRQNIEKKMNKLGTKIVSVERREKIKKSLTPNHQKASSGKSSPFKVSPLSFGRKKIREGESSAENETKLEEQVQDDHEEGSFTEGLSEASLPSGLLEGSAEDAEKSALRGNNSGVGSNADLTIEEDEEEESVALQQAQQVRYESGYMLNSKEMEESSEKHVQAAVLHVDQTA</sequence>
<proteinExistence type="evidence at protein level"/>
<organism>
    <name type="scientific">Rattus norvegicus</name>
    <name type="common">Rat</name>
    <dbReference type="NCBI Taxonomy" id="10116"/>
    <lineage>
        <taxon>Eukaryota</taxon>
        <taxon>Metazoa</taxon>
        <taxon>Chordata</taxon>
        <taxon>Craniata</taxon>
        <taxon>Vertebrata</taxon>
        <taxon>Euteleostomi</taxon>
        <taxon>Mammalia</taxon>
        <taxon>Eutheria</taxon>
        <taxon>Euarchontoglires</taxon>
        <taxon>Glires</taxon>
        <taxon>Rodentia</taxon>
        <taxon>Myomorpha</taxon>
        <taxon>Muroidea</taxon>
        <taxon>Muridae</taxon>
        <taxon>Murinae</taxon>
        <taxon>Rattus</taxon>
    </lineage>
</organism>
<protein>
    <recommendedName>
        <fullName evidence="9">Caveolae-associated protein 2</fullName>
    </recommendedName>
    <alternativeName>
        <fullName>Cavin-2</fullName>
    </alternativeName>
    <alternativeName>
        <fullName>Phosphatidylserine-binding protein</fullName>
    </alternativeName>
    <alternativeName>
        <fullName>Serum deprivation-response protein</fullName>
    </alternativeName>
</protein>
<name>CAVN2_RAT</name>
<keyword id="KW-0007">Acetylation</keyword>
<keyword id="KW-0175">Coiled coil</keyword>
<keyword id="KW-0963">Cytoplasm</keyword>
<keyword id="KW-0446">Lipid-binding</keyword>
<keyword id="KW-0472">Membrane</keyword>
<keyword id="KW-0597">Phosphoprotein</keyword>
<keyword id="KW-1185">Reference proteome</keyword>
<reference key="1">
    <citation type="journal article" date="2004" name="Genome Res.">
        <title>The status, quality, and expansion of the NIH full-length cDNA project: the Mammalian Gene Collection (MGC).</title>
        <authorList>
            <consortium name="The MGC Project Team"/>
        </authorList>
    </citation>
    <scope>NUCLEOTIDE SEQUENCE [LARGE SCALE MRNA]</scope>
    <source>
        <tissue>Lung</tissue>
    </source>
</reference>
<reference evidence="7" key="2">
    <citation type="journal article" date="1998" name="J. Cell Biol.">
        <title>Targeting of protein kinase Calpha to caveolae.</title>
        <authorList>
            <person name="Mineo C."/>
            <person name="Ying Y.-S."/>
            <person name="Chapline C."/>
            <person name="Jaken S."/>
            <person name="Anderson R.G.W."/>
        </authorList>
    </citation>
    <scope>FUNCTION</scope>
    <scope>INTERACTION WITH PRKCA</scope>
    <scope>SUBCELLULAR LOCATION</scope>
</reference>
<reference key="3">
    <citation type="journal article" date="2012" name="Nat. Commun.">
        <title>Quantitative maps of protein phosphorylation sites across 14 different rat organs and tissues.</title>
        <authorList>
            <person name="Lundby A."/>
            <person name="Secher A."/>
            <person name="Lage K."/>
            <person name="Nordsborg N.B."/>
            <person name="Dmytriyev A."/>
            <person name="Lundby C."/>
            <person name="Olsen J.V."/>
        </authorList>
    </citation>
    <scope>PHOSPHORYLATION [LARGE SCALE ANALYSIS] AT SER-27; SER-35; SER-51; SER-202; SER-203; SER-217; SER-283; SER-292; SER-326; SER-335; SER-362; SER-389 AND SER-395</scope>
    <scope>IDENTIFICATION BY MASS SPECTROMETRY [LARGE SCALE ANALYSIS]</scope>
</reference>
<gene>
    <name evidence="9" type="primary">Cavin2</name>
    <name evidence="8" type="synonym">Sdpr</name>
</gene>
<evidence type="ECO:0000250" key="1"/>
<evidence type="ECO:0000250" key="2">
    <source>
        <dbReference type="UniProtKB" id="O95810"/>
    </source>
</evidence>
<evidence type="ECO:0000250" key="3">
    <source>
        <dbReference type="UniProtKB" id="Q63918"/>
    </source>
</evidence>
<evidence type="ECO:0000255" key="4"/>
<evidence type="ECO:0000256" key="5">
    <source>
        <dbReference type="SAM" id="MobiDB-lite"/>
    </source>
</evidence>
<evidence type="ECO:0000269" key="6">
    <source>
    </source>
</evidence>
<evidence type="ECO:0000305" key="7"/>
<evidence type="ECO:0000312" key="8">
    <source>
        <dbReference type="EMBL" id="AAH81956.1"/>
    </source>
</evidence>
<evidence type="ECO:0000312" key="9">
    <source>
        <dbReference type="RGD" id="1359345"/>
    </source>
</evidence>
<evidence type="ECO:0007744" key="10">
    <source>
    </source>
</evidence>
<comment type="function">
    <text evidence="2 3 6">Plays an important role in caveolar biogenesis and morphology. Regulates caveolae morphology by inducing membrane curvature within caveolae. Plays a role in caveola formation in a tissue-specific manner. Required for the formation of caveolae in the lung and fat endothelia but not in the heart endothelia. Negatively regulates the size or stability of CAVIN complexes in the lung endothelial cells (By similarity). May play a role in targeting PRKCA to caveolae (PubMed:9566962).</text>
</comment>
<comment type="subunit">
    <text evidence="2 3 6">Component of the CAVIN complex composed of CAVIN1, CAVIN2, CAVIN3 and CAVIN. Interacts with CAVIN4; this augments the transactivation of NPPA by CAVIN4 (By similarity). Binds to PRKCA in the presence of phosphatidylserine (PubMed:9566962). Interacts with CAVIN1 and CAV3 (By similarity).</text>
</comment>
<comment type="subcellular location">
    <subcellularLocation>
        <location evidence="2">Cytoplasm</location>
        <location evidence="2">Cytosol</location>
    </subcellularLocation>
    <subcellularLocation>
        <location evidence="6">Membrane</location>
        <location evidence="6">Caveola</location>
    </subcellularLocation>
    <text evidence="6">Localizes in the caveolae in a caveolin-dependent manner.</text>
</comment>
<comment type="domain">
    <text evidence="2">The leucine-zipper domain is essential for its localization in the caveolae.</text>
</comment>
<comment type="PTM">
    <text evidence="1">The N-terminus is blocked.</text>
</comment>
<comment type="PTM">
    <text evidence="1">Phosphorylated on Ser residues.</text>
</comment>
<comment type="miscellaneous">
    <text evidence="1">Binds phosphatidylserine (PS) in a calcium-independent manner. PS-binding is inhibited by phosphotidic acid and phosphatidylinositol. Does not bind phosphatidylcholine (By similarity).</text>
</comment>
<comment type="similarity">
    <text evidence="7">Belongs to the CAVIN family.</text>
</comment>
<dbReference type="EMBL" id="BC081956">
    <property type="protein sequence ID" value="AAH81956.1"/>
    <property type="molecule type" value="mRNA"/>
</dbReference>
<dbReference type="RefSeq" id="NP_001007713.1">
    <property type="nucleotide sequence ID" value="NM_001007712.2"/>
</dbReference>
<dbReference type="SMR" id="Q66H98"/>
<dbReference type="BioGRID" id="261332">
    <property type="interactions" value="1"/>
</dbReference>
<dbReference type="FunCoup" id="Q66H98">
    <property type="interactions" value="183"/>
</dbReference>
<dbReference type="IntAct" id="Q66H98">
    <property type="interactions" value="1"/>
</dbReference>
<dbReference type="STRING" id="10116.ENSRNOP00000030025"/>
<dbReference type="iPTMnet" id="Q66H98"/>
<dbReference type="PhosphoSitePlus" id="Q66H98"/>
<dbReference type="PaxDb" id="10116-ENSRNOP00000030025"/>
<dbReference type="Ensembl" id="ENSRNOT00000028907.6">
    <property type="protein sequence ID" value="ENSRNOP00000030025.3"/>
    <property type="gene ID" value="ENSRNOG00000025895.6"/>
</dbReference>
<dbReference type="GeneID" id="316384"/>
<dbReference type="KEGG" id="rno:316384"/>
<dbReference type="UCSC" id="RGD:1359345">
    <property type="organism name" value="rat"/>
</dbReference>
<dbReference type="AGR" id="RGD:1359345"/>
<dbReference type="CTD" id="8436"/>
<dbReference type="RGD" id="1359345">
    <property type="gene designation" value="Cavin2"/>
</dbReference>
<dbReference type="eggNOG" id="ENOG502QQCA">
    <property type="taxonomic scope" value="Eukaryota"/>
</dbReference>
<dbReference type="GeneTree" id="ENSGT00950000182910"/>
<dbReference type="HOGENOM" id="CLU_039470_1_0_1"/>
<dbReference type="InParanoid" id="Q66H98"/>
<dbReference type="OMA" id="QMPNDQE"/>
<dbReference type="OrthoDB" id="76127at9989"/>
<dbReference type="PhylomeDB" id="Q66H98"/>
<dbReference type="TreeFam" id="TF331031"/>
<dbReference type="PRO" id="PR:Q66H98"/>
<dbReference type="Proteomes" id="UP000002494">
    <property type="component" value="Chromosome 9"/>
</dbReference>
<dbReference type="Bgee" id="ENSRNOG00000025895">
    <property type="expression patterns" value="Expressed in lung and 19 other cell types or tissues"/>
</dbReference>
<dbReference type="GO" id="GO:0005901">
    <property type="term" value="C:caveola"/>
    <property type="evidence" value="ECO:0000250"/>
    <property type="project" value="UniProtKB"/>
</dbReference>
<dbReference type="GO" id="GO:0005737">
    <property type="term" value="C:cytoplasm"/>
    <property type="evidence" value="ECO:0000266"/>
    <property type="project" value="RGD"/>
</dbReference>
<dbReference type="GO" id="GO:0005829">
    <property type="term" value="C:cytosol"/>
    <property type="evidence" value="ECO:0000250"/>
    <property type="project" value="UniProtKB"/>
</dbReference>
<dbReference type="GO" id="GO:0045121">
    <property type="term" value="C:membrane raft"/>
    <property type="evidence" value="ECO:0000266"/>
    <property type="project" value="RGD"/>
</dbReference>
<dbReference type="GO" id="GO:0005654">
    <property type="term" value="C:nucleoplasm"/>
    <property type="evidence" value="ECO:0007669"/>
    <property type="project" value="Ensembl"/>
</dbReference>
<dbReference type="GO" id="GO:0001786">
    <property type="term" value="F:phosphatidylserine binding"/>
    <property type="evidence" value="ECO:0000250"/>
    <property type="project" value="UniProtKB"/>
</dbReference>
<dbReference type="GO" id="GO:0005080">
    <property type="term" value="F:protein kinase C binding"/>
    <property type="evidence" value="ECO:0000318"/>
    <property type="project" value="GO_Central"/>
</dbReference>
<dbReference type="GO" id="GO:0097320">
    <property type="term" value="P:plasma membrane tubulation"/>
    <property type="evidence" value="ECO:0000250"/>
    <property type="project" value="UniProtKB"/>
</dbReference>
<dbReference type="InterPro" id="IPR026752">
    <property type="entry name" value="Cavin_fam"/>
</dbReference>
<dbReference type="PANTHER" id="PTHR15240:SF1">
    <property type="entry name" value="CAVEOLAE-ASSOCIATED PROTEIN 2"/>
    <property type="match status" value="1"/>
</dbReference>
<dbReference type="PANTHER" id="PTHR15240">
    <property type="entry name" value="CAVIN"/>
    <property type="match status" value="1"/>
</dbReference>
<dbReference type="Pfam" id="PF15237">
    <property type="entry name" value="PTRF_SDPR"/>
    <property type="match status" value="1"/>
</dbReference>